<organism>
    <name type="scientific">Oryza sativa subsp. japonica</name>
    <name type="common">Rice</name>
    <dbReference type="NCBI Taxonomy" id="39947"/>
    <lineage>
        <taxon>Eukaryota</taxon>
        <taxon>Viridiplantae</taxon>
        <taxon>Streptophyta</taxon>
        <taxon>Embryophyta</taxon>
        <taxon>Tracheophyta</taxon>
        <taxon>Spermatophyta</taxon>
        <taxon>Magnoliopsida</taxon>
        <taxon>Liliopsida</taxon>
        <taxon>Poales</taxon>
        <taxon>Poaceae</taxon>
        <taxon>BOP clade</taxon>
        <taxon>Oryzoideae</taxon>
        <taxon>Oryzeae</taxon>
        <taxon>Oryzinae</taxon>
        <taxon>Oryza</taxon>
        <taxon>Oryza sativa</taxon>
    </lineage>
</organism>
<comment type="function">
    <text>Probable transcription factor.</text>
</comment>
<comment type="subcellular location">
    <subcellularLocation>
        <location evidence="4">Nucleus</location>
    </subcellularLocation>
</comment>
<comment type="tissue specificity">
    <text evidence="3">Expressed in seedling roots.</text>
</comment>
<evidence type="ECO:0000255" key="1">
    <source>
        <dbReference type="PROSITE-ProRule" id="PRU00251"/>
    </source>
</evidence>
<evidence type="ECO:0000255" key="2">
    <source>
        <dbReference type="PROSITE-ProRule" id="PRU00629"/>
    </source>
</evidence>
<evidence type="ECO:0000269" key="3">
    <source>
    </source>
</evidence>
<evidence type="ECO:0000305" key="4"/>
<proteinExistence type="evidence at transcript level"/>
<dbReference type="EMBL" id="AY177700">
    <property type="protein sequence ID" value="AAO47710.1"/>
    <property type="molecule type" value="mRNA"/>
</dbReference>
<dbReference type="EMBL" id="DP000011">
    <property type="protein sequence ID" value="ABA96134.2"/>
    <property type="molecule type" value="Genomic_DNA"/>
</dbReference>
<dbReference type="EMBL" id="AP008218">
    <property type="protein sequence ID" value="BAF29403.1"/>
    <property type="molecule type" value="Genomic_DNA"/>
</dbReference>
<dbReference type="EMBL" id="AP014968">
    <property type="protein sequence ID" value="BAT16296.1"/>
    <property type="molecule type" value="Genomic_DNA"/>
</dbReference>
<dbReference type="RefSeq" id="XP_015618440.1">
    <property type="nucleotide sequence ID" value="XM_015762954.1"/>
</dbReference>
<dbReference type="SMR" id="Q2QW55"/>
<dbReference type="FunCoup" id="Q2QW55">
    <property type="interactions" value="12"/>
</dbReference>
<dbReference type="STRING" id="39947.Q2QW55"/>
<dbReference type="PaxDb" id="39947-Q2QW55"/>
<dbReference type="EnsemblPlants" id="Os12t0206800-00">
    <property type="protein sequence ID" value="Os12t0206800-00"/>
    <property type="gene ID" value="Os12g0206800"/>
</dbReference>
<dbReference type="Gramene" id="Os12t0206800-00">
    <property type="protein sequence ID" value="Os12t0206800-00"/>
    <property type="gene ID" value="Os12g0206800"/>
</dbReference>
<dbReference type="KEGG" id="dosa:Os12g0206800"/>
<dbReference type="eggNOG" id="KOG0014">
    <property type="taxonomic scope" value="Eukaryota"/>
</dbReference>
<dbReference type="HOGENOM" id="CLU_053053_0_3_1"/>
<dbReference type="InParanoid" id="Q2QW55"/>
<dbReference type="OMA" id="TYGNCFF"/>
<dbReference type="OrthoDB" id="1898716at2759"/>
<dbReference type="Proteomes" id="UP000000763">
    <property type="component" value="Chromosome 12"/>
</dbReference>
<dbReference type="Proteomes" id="UP000059680">
    <property type="component" value="Chromosome 12"/>
</dbReference>
<dbReference type="GO" id="GO:0005634">
    <property type="term" value="C:nucleus"/>
    <property type="evidence" value="ECO:0007669"/>
    <property type="project" value="UniProtKB-SubCell"/>
</dbReference>
<dbReference type="GO" id="GO:0000981">
    <property type="term" value="F:DNA-binding transcription factor activity, RNA polymerase II-specific"/>
    <property type="evidence" value="ECO:0000318"/>
    <property type="project" value="GO_Central"/>
</dbReference>
<dbReference type="GO" id="GO:0046983">
    <property type="term" value="F:protein dimerization activity"/>
    <property type="evidence" value="ECO:0007669"/>
    <property type="project" value="InterPro"/>
</dbReference>
<dbReference type="GO" id="GO:0000978">
    <property type="term" value="F:RNA polymerase II cis-regulatory region sequence-specific DNA binding"/>
    <property type="evidence" value="ECO:0000318"/>
    <property type="project" value="GO_Central"/>
</dbReference>
<dbReference type="GO" id="GO:0045944">
    <property type="term" value="P:positive regulation of transcription by RNA polymerase II"/>
    <property type="evidence" value="ECO:0007669"/>
    <property type="project" value="InterPro"/>
</dbReference>
<dbReference type="GO" id="GO:0006357">
    <property type="term" value="P:regulation of transcription by RNA polymerase II"/>
    <property type="evidence" value="ECO:0000318"/>
    <property type="project" value="GO_Central"/>
</dbReference>
<dbReference type="GO" id="GO:0048364">
    <property type="term" value="P:root development"/>
    <property type="evidence" value="ECO:0007669"/>
    <property type="project" value="EnsemblPlants"/>
</dbReference>
<dbReference type="GO" id="GO:0010228">
    <property type="term" value="P:vegetative to reproductive phase transition of meristem"/>
    <property type="evidence" value="ECO:0007669"/>
    <property type="project" value="EnsemblPlants"/>
</dbReference>
<dbReference type="CDD" id="cd00265">
    <property type="entry name" value="MADS_MEF2_like"/>
    <property type="match status" value="1"/>
</dbReference>
<dbReference type="Gene3D" id="3.40.1810.10">
    <property type="entry name" value="Transcription factor, MADS-box"/>
    <property type="match status" value="1"/>
</dbReference>
<dbReference type="InterPro" id="IPR050142">
    <property type="entry name" value="MADS-box/MEF2_TF"/>
</dbReference>
<dbReference type="InterPro" id="IPR033896">
    <property type="entry name" value="MEF2-like_N"/>
</dbReference>
<dbReference type="InterPro" id="IPR002487">
    <property type="entry name" value="TF_Kbox"/>
</dbReference>
<dbReference type="InterPro" id="IPR002100">
    <property type="entry name" value="TF_MADSbox"/>
</dbReference>
<dbReference type="InterPro" id="IPR036879">
    <property type="entry name" value="TF_MADSbox_sf"/>
</dbReference>
<dbReference type="PANTHER" id="PTHR48019">
    <property type="entry name" value="SERUM RESPONSE FACTOR HOMOLOG"/>
    <property type="match status" value="1"/>
</dbReference>
<dbReference type="Pfam" id="PF01486">
    <property type="entry name" value="K-box"/>
    <property type="match status" value="1"/>
</dbReference>
<dbReference type="Pfam" id="PF00319">
    <property type="entry name" value="SRF-TF"/>
    <property type="match status" value="1"/>
</dbReference>
<dbReference type="PRINTS" id="PR00404">
    <property type="entry name" value="MADSDOMAIN"/>
</dbReference>
<dbReference type="SMART" id="SM00432">
    <property type="entry name" value="MADS"/>
    <property type="match status" value="1"/>
</dbReference>
<dbReference type="SUPFAM" id="SSF55455">
    <property type="entry name" value="SRF-like"/>
    <property type="match status" value="1"/>
</dbReference>
<dbReference type="PROSITE" id="PS51297">
    <property type="entry name" value="K_BOX"/>
    <property type="match status" value="1"/>
</dbReference>
<dbReference type="PROSITE" id="PS00350">
    <property type="entry name" value="MADS_BOX_1"/>
    <property type="match status" value="1"/>
</dbReference>
<dbReference type="PROSITE" id="PS50066">
    <property type="entry name" value="MADS_BOX_2"/>
    <property type="match status" value="1"/>
</dbReference>
<sequence length="202" mass="23233">MVRGKVQMRRIENPVHRQVTFCKRRGGLLKKARELSVLCDADVGVIIFSSQGKLHELATNGNMHNLVERYQSNVAGGQMEPGALQRQQVAEQGIFLLREEIDLLQRGLRSTYGGGAGEMTLDKLHALEKGLELWIYQIRTTKMQMMQQEIQFLRNKEGILKEANEMLQEKVKEQQKLYMSLLDLHSQQPTQPMTYGNRFFSI</sequence>
<gene>
    <name type="primary">MADS33</name>
    <name type="ordered locus">Os12g0206800</name>
    <name type="ordered locus">LOC_Os12g10520</name>
</gene>
<name>MAD33_ORYSJ</name>
<accession>Q2QW55</accession>
<accession>Q0IPG2</accession>
<accession>Q84NC1</accession>
<protein>
    <recommendedName>
        <fullName>MADS-box transcription factor 33</fullName>
    </recommendedName>
    <alternativeName>
        <fullName>OsMADS33</fullName>
    </alternativeName>
</protein>
<reference key="1">
    <citation type="journal article" date="2003" name="Plant Cell Physiol.">
        <title>Systematic reverse genetic screening of T-DNA tagged genes in rice for functional genomic analyses: MADS-box genes as a test case.</title>
        <authorList>
            <person name="Lee S."/>
            <person name="Kim J."/>
            <person name="Son J.-S."/>
            <person name="Nam J."/>
            <person name="Jeong D.-H."/>
            <person name="Lee K."/>
            <person name="Jang S."/>
            <person name="Yoo J."/>
            <person name="Lee J."/>
            <person name="Lee D.-Y."/>
            <person name="Kang H.-G."/>
            <person name="An G."/>
        </authorList>
    </citation>
    <scope>NUCLEOTIDE SEQUENCE [MRNA]</scope>
    <scope>TISSUE SPECIFICITY</scope>
    <source>
        <strain>cv. Dongjin</strain>
    </source>
</reference>
<reference key="2">
    <citation type="journal article" date="2005" name="BMC Biol.">
        <title>The sequence of rice chromosomes 11 and 12, rich in disease resistance genes and recent gene duplications.</title>
        <authorList>
            <consortium name="The rice chromosomes 11 and 12 sequencing consortia"/>
        </authorList>
    </citation>
    <scope>NUCLEOTIDE SEQUENCE [LARGE SCALE GENOMIC DNA]</scope>
    <source>
        <strain>cv. Nipponbare</strain>
    </source>
</reference>
<reference key="3">
    <citation type="journal article" date="2005" name="Nature">
        <title>The map-based sequence of the rice genome.</title>
        <authorList>
            <consortium name="International rice genome sequencing project (IRGSP)"/>
        </authorList>
    </citation>
    <scope>NUCLEOTIDE SEQUENCE [LARGE SCALE GENOMIC DNA]</scope>
    <source>
        <strain>cv. Nipponbare</strain>
    </source>
</reference>
<reference key="4">
    <citation type="journal article" date="2008" name="Nucleic Acids Res.">
        <title>The rice annotation project database (RAP-DB): 2008 update.</title>
        <authorList>
            <consortium name="The rice annotation project (RAP)"/>
        </authorList>
    </citation>
    <scope>GENOME REANNOTATION</scope>
    <source>
        <strain>cv. Nipponbare</strain>
    </source>
</reference>
<reference key="5">
    <citation type="journal article" date="2013" name="Rice">
        <title>Improvement of the Oryza sativa Nipponbare reference genome using next generation sequence and optical map data.</title>
        <authorList>
            <person name="Kawahara Y."/>
            <person name="de la Bastide M."/>
            <person name="Hamilton J.P."/>
            <person name="Kanamori H."/>
            <person name="McCombie W.R."/>
            <person name="Ouyang S."/>
            <person name="Schwartz D.C."/>
            <person name="Tanaka T."/>
            <person name="Wu J."/>
            <person name="Zhou S."/>
            <person name="Childs K.L."/>
            <person name="Davidson R.M."/>
            <person name="Lin H."/>
            <person name="Quesada-Ocampo L."/>
            <person name="Vaillancourt B."/>
            <person name="Sakai H."/>
            <person name="Lee S.S."/>
            <person name="Kim J."/>
            <person name="Numa H."/>
            <person name="Itoh T."/>
            <person name="Buell C.R."/>
            <person name="Matsumoto T."/>
        </authorList>
    </citation>
    <scope>GENOME REANNOTATION</scope>
    <source>
        <strain>cv. Nipponbare</strain>
    </source>
</reference>
<keyword id="KW-0238">DNA-binding</keyword>
<keyword id="KW-0539">Nucleus</keyword>
<keyword id="KW-1185">Reference proteome</keyword>
<keyword id="KW-0804">Transcription</keyword>
<keyword id="KW-0805">Transcription regulation</keyword>
<feature type="chain" id="PRO_0000229913" description="MADS-box transcription factor 33">
    <location>
        <begin position="1"/>
        <end position="202"/>
    </location>
</feature>
<feature type="domain" description="MADS-box" evidence="1">
    <location>
        <begin position="1"/>
        <end position="61"/>
    </location>
</feature>
<feature type="domain" description="K-box" evidence="2">
    <location>
        <begin position="87"/>
        <end position="177"/>
    </location>
</feature>